<evidence type="ECO:0000255" key="1">
    <source>
        <dbReference type="HAMAP-Rule" id="MF_01343"/>
    </source>
</evidence>
<evidence type="ECO:0000305" key="2"/>
<dbReference type="EMBL" id="AE015450">
    <property type="protein sequence ID" value="AAP56432.1"/>
    <property type="molecule type" value="Genomic_DNA"/>
</dbReference>
<dbReference type="RefSeq" id="WP_011113311.1">
    <property type="nucleotide sequence ID" value="NC_004829.2"/>
</dbReference>
<dbReference type="SMR" id="Q7NC27"/>
<dbReference type="GeneID" id="93509902"/>
<dbReference type="KEGG" id="mga:MGA_0766"/>
<dbReference type="HOGENOM" id="CLU_148518_1_0_14"/>
<dbReference type="OrthoDB" id="9799262at2"/>
<dbReference type="Proteomes" id="UP000001418">
    <property type="component" value="Chromosome"/>
</dbReference>
<dbReference type="GO" id="GO:0022627">
    <property type="term" value="C:cytosolic small ribosomal subunit"/>
    <property type="evidence" value="ECO:0007669"/>
    <property type="project" value="TreeGrafter"/>
</dbReference>
<dbReference type="GO" id="GO:0019843">
    <property type="term" value="F:rRNA binding"/>
    <property type="evidence" value="ECO:0007669"/>
    <property type="project" value="UniProtKB-UniRule"/>
</dbReference>
<dbReference type="GO" id="GO:0003735">
    <property type="term" value="F:structural constituent of ribosome"/>
    <property type="evidence" value="ECO:0007669"/>
    <property type="project" value="InterPro"/>
</dbReference>
<dbReference type="GO" id="GO:0006412">
    <property type="term" value="P:translation"/>
    <property type="evidence" value="ECO:0007669"/>
    <property type="project" value="UniProtKB-UniRule"/>
</dbReference>
<dbReference type="CDD" id="cd00353">
    <property type="entry name" value="Ribosomal_S15p_S13e"/>
    <property type="match status" value="1"/>
</dbReference>
<dbReference type="FunFam" id="1.10.287.10:FF:000002">
    <property type="entry name" value="30S ribosomal protein S15"/>
    <property type="match status" value="1"/>
</dbReference>
<dbReference type="Gene3D" id="6.10.250.3130">
    <property type="match status" value="1"/>
</dbReference>
<dbReference type="Gene3D" id="1.10.287.10">
    <property type="entry name" value="S15/NS1, RNA-binding"/>
    <property type="match status" value="1"/>
</dbReference>
<dbReference type="HAMAP" id="MF_01343_B">
    <property type="entry name" value="Ribosomal_uS15_B"/>
    <property type="match status" value="1"/>
</dbReference>
<dbReference type="InterPro" id="IPR000589">
    <property type="entry name" value="Ribosomal_uS15"/>
</dbReference>
<dbReference type="InterPro" id="IPR005290">
    <property type="entry name" value="Ribosomal_uS15_bac-type"/>
</dbReference>
<dbReference type="InterPro" id="IPR009068">
    <property type="entry name" value="uS15_NS1_RNA-bd_sf"/>
</dbReference>
<dbReference type="NCBIfam" id="TIGR00952">
    <property type="entry name" value="S15_bact"/>
    <property type="match status" value="1"/>
</dbReference>
<dbReference type="PANTHER" id="PTHR23321">
    <property type="entry name" value="RIBOSOMAL PROTEIN S15, BACTERIAL AND ORGANELLAR"/>
    <property type="match status" value="1"/>
</dbReference>
<dbReference type="PANTHER" id="PTHR23321:SF26">
    <property type="entry name" value="SMALL RIBOSOMAL SUBUNIT PROTEIN US15M"/>
    <property type="match status" value="1"/>
</dbReference>
<dbReference type="Pfam" id="PF00312">
    <property type="entry name" value="Ribosomal_S15"/>
    <property type="match status" value="1"/>
</dbReference>
<dbReference type="SMART" id="SM01387">
    <property type="entry name" value="Ribosomal_S15"/>
    <property type="match status" value="1"/>
</dbReference>
<dbReference type="SUPFAM" id="SSF47060">
    <property type="entry name" value="S15/NS1 RNA-binding domain"/>
    <property type="match status" value="1"/>
</dbReference>
<dbReference type="PROSITE" id="PS00362">
    <property type="entry name" value="RIBOSOMAL_S15"/>
    <property type="match status" value="1"/>
</dbReference>
<accession>Q7NC27</accession>
<organism>
    <name type="scientific">Mycoplasmoides gallisepticum (strain R(low / passage 15 / clone 2))</name>
    <name type="common">Mycoplasma gallisepticum</name>
    <dbReference type="NCBI Taxonomy" id="710127"/>
    <lineage>
        <taxon>Bacteria</taxon>
        <taxon>Bacillati</taxon>
        <taxon>Mycoplasmatota</taxon>
        <taxon>Mycoplasmoidales</taxon>
        <taxon>Mycoplasmoidaceae</taxon>
        <taxon>Mycoplasmoides</taxon>
    </lineage>
</organism>
<feature type="chain" id="PRO_0000115475" description="Small ribosomal subunit protein uS15">
    <location>
        <begin position="1"/>
        <end position="90"/>
    </location>
</feature>
<gene>
    <name evidence="1" type="primary">rpsO</name>
    <name type="ordered locus">MYCGA0820</name>
    <name type="ORF">MGA_0766</name>
</gene>
<name>RS15_MYCGA</name>
<keyword id="KW-1185">Reference proteome</keyword>
<keyword id="KW-0687">Ribonucleoprotein</keyword>
<keyword id="KW-0689">Ribosomal protein</keyword>
<keyword id="KW-0694">RNA-binding</keyword>
<keyword id="KW-0699">rRNA-binding</keyword>
<sequence length="90" mass="10505">MALSKDKKTEIIKKFQKNDADVGSVFVQVAVLTEEIKLLTEHLLKNKKDFISKRGLYTKVSKRKNLLNYLKQNDLNAYRNLISELELRHS</sequence>
<comment type="function">
    <text evidence="1">One of the primary rRNA binding proteins, it binds directly to 16S rRNA where it helps nucleate assembly of the platform of the 30S subunit by binding and bridging several RNA helices of the 16S rRNA.</text>
</comment>
<comment type="function">
    <text evidence="1">Forms an intersubunit bridge (bridge B4) with the 23S rRNA of the 50S subunit in the ribosome.</text>
</comment>
<comment type="subunit">
    <text evidence="1">Part of the 30S ribosomal subunit. Forms a bridge to the 50S subunit in the 70S ribosome, contacting the 23S rRNA.</text>
</comment>
<comment type="similarity">
    <text evidence="1">Belongs to the universal ribosomal protein uS15 family.</text>
</comment>
<reference key="1">
    <citation type="journal article" date="2003" name="Microbiology">
        <title>The complete genome sequence of the avian pathogen Mycoplasma gallisepticum strain R(low).</title>
        <authorList>
            <person name="Papazisi L."/>
            <person name="Gorton T.S."/>
            <person name="Kutish G."/>
            <person name="Markham P.F."/>
            <person name="Browning G.F."/>
            <person name="Nguyen D.K."/>
            <person name="Swartzell S."/>
            <person name="Madan A."/>
            <person name="Mahairas G."/>
            <person name="Geary S.J."/>
        </authorList>
    </citation>
    <scope>NUCLEOTIDE SEQUENCE [LARGE SCALE GENOMIC DNA]</scope>
    <source>
        <strain>R(low / passage 15 / clone 2)</strain>
    </source>
</reference>
<proteinExistence type="inferred from homology"/>
<protein>
    <recommendedName>
        <fullName evidence="1">Small ribosomal subunit protein uS15</fullName>
    </recommendedName>
    <alternativeName>
        <fullName evidence="2">30S ribosomal protein S15</fullName>
    </alternativeName>
</protein>